<organism>
    <name type="scientific">Prochlorococcus marinus (strain MIT 9215)</name>
    <dbReference type="NCBI Taxonomy" id="93060"/>
    <lineage>
        <taxon>Bacteria</taxon>
        <taxon>Bacillati</taxon>
        <taxon>Cyanobacteriota</taxon>
        <taxon>Cyanophyceae</taxon>
        <taxon>Synechococcales</taxon>
        <taxon>Prochlorococcaceae</taxon>
        <taxon>Prochlorococcus</taxon>
    </lineage>
</organism>
<reference key="1">
    <citation type="journal article" date="2007" name="PLoS Genet.">
        <title>Patterns and implications of gene gain and loss in the evolution of Prochlorococcus.</title>
        <authorList>
            <person name="Kettler G.C."/>
            <person name="Martiny A.C."/>
            <person name="Huang K."/>
            <person name="Zucker J."/>
            <person name="Coleman M.L."/>
            <person name="Rodrigue S."/>
            <person name="Chen F."/>
            <person name="Lapidus A."/>
            <person name="Ferriera S."/>
            <person name="Johnson J."/>
            <person name="Steglich C."/>
            <person name="Church G.M."/>
            <person name="Richardson P."/>
            <person name="Chisholm S.W."/>
        </authorList>
    </citation>
    <scope>NUCLEOTIDE SEQUENCE [LARGE SCALE GENOMIC DNA]</scope>
    <source>
        <strain>MIT 9215</strain>
    </source>
</reference>
<gene>
    <name evidence="1" type="primary">metK</name>
    <name type="ordered locus">P9215_03361</name>
</gene>
<protein>
    <recommendedName>
        <fullName evidence="1">S-adenosylmethionine synthase</fullName>
        <shortName evidence="1">AdoMet synthase</shortName>
        <ecNumber evidence="1">2.5.1.6</ecNumber>
    </recommendedName>
    <alternativeName>
        <fullName evidence="1">MAT</fullName>
    </alternativeName>
    <alternativeName>
        <fullName evidence="1">Methionine adenosyltransferase</fullName>
    </alternativeName>
</protein>
<accession>A8G2X2</accession>
<sequence length="413" mass="45217">MSDFIFTSESVTEGHPDKICDQISDAVLDALLTEDPESRVACETVVNTGLCLLTGEITSKAKVDYIKLVRNVIKEIGYEGYKAGGFDANSCAVLVALDEQSPDISQGVNEADDVNDDLEDNTGAGDQGIMFGYACDETPELMPLPISLAHRLAIQLAKVRHENLLNYLLPDGKTQVSIDYEKGLPVSINTILISTQHNPEIDGLTNEEEIRQRIKEDLWKHVVIPATEDLEIKPNIIKTRFLVNPTGKFVVGGPQGDAGLTGRKIIVDTYGGYARHGGGAFSGKDPTKVDRSAAYAARYVAKSIVKAKLAKKAEVQLSYAIGVAKPISILVDTFDTGVISQANLTELIKKYFDLRPAAIIKEFDLRNLPQKMGGKFFRKTASYGHFGRRDLDLPWEKVEEKAAQLAEASKVFL</sequence>
<keyword id="KW-0067">ATP-binding</keyword>
<keyword id="KW-0963">Cytoplasm</keyword>
<keyword id="KW-0460">Magnesium</keyword>
<keyword id="KW-0479">Metal-binding</keyword>
<keyword id="KW-0547">Nucleotide-binding</keyword>
<keyword id="KW-0554">One-carbon metabolism</keyword>
<keyword id="KW-0630">Potassium</keyword>
<keyword id="KW-0808">Transferase</keyword>
<name>METK_PROM2</name>
<evidence type="ECO:0000255" key="1">
    <source>
        <dbReference type="HAMAP-Rule" id="MF_00086"/>
    </source>
</evidence>
<feature type="chain" id="PRO_1000057563" description="S-adenosylmethionine synthase">
    <location>
        <begin position="1"/>
        <end position="413"/>
    </location>
</feature>
<feature type="region of interest" description="Flexible loop" evidence="1">
    <location>
        <begin position="100"/>
        <end position="110"/>
    </location>
</feature>
<feature type="binding site" description="in other chain" evidence="1">
    <location>
        <position position="15"/>
    </location>
    <ligand>
        <name>ATP</name>
        <dbReference type="ChEBI" id="CHEBI:30616"/>
        <note>ligand shared between two neighboring subunits</note>
    </ligand>
</feature>
<feature type="binding site" evidence="1">
    <location>
        <position position="17"/>
    </location>
    <ligand>
        <name>Mg(2+)</name>
        <dbReference type="ChEBI" id="CHEBI:18420"/>
    </ligand>
</feature>
<feature type="binding site" evidence="1">
    <location>
        <position position="43"/>
    </location>
    <ligand>
        <name>K(+)</name>
        <dbReference type="ChEBI" id="CHEBI:29103"/>
    </ligand>
</feature>
<feature type="binding site" description="in other chain" evidence="1">
    <location>
        <position position="56"/>
    </location>
    <ligand>
        <name>L-methionine</name>
        <dbReference type="ChEBI" id="CHEBI:57844"/>
        <note>ligand shared between two neighboring subunits</note>
    </ligand>
</feature>
<feature type="binding site" description="in other chain" evidence="1">
    <location>
        <position position="100"/>
    </location>
    <ligand>
        <name>L-methionine</name>
        <dbReference type="ChEBI" id="CHEBI:57844"/>
        <note>ligand shared between two neighboring subunits</note>
    </ligand>
</feature>
<feature type="binding site" description="in other chain" evidence="1">
    <location>
        <begin position="171"/>
        <end position="173"/>
    </location>
    <ligand>
        <name>ATP</name>
        <dbReference type="ChEBI" id="CHEBI:30616"/>
        <note>ligand shared between two neighboring subunits</note>
    </ligand>
</feature>
<feature type="binding site" description="in other chain" evidence="1">
    <location>
        <begin position="248"/>
        <end position="249"/>
    </location>
    <ligand>
        <name>ATP</name>
        <dbReference type="ChEBI" id="CHEBI:30616"/>
        <note>ligand shared between two neighboring subunits</note>
    </ligand>
</feature>
<feature type="binding site" evidence="1">
    <location>
        <position position="257"/>
    </location>
    <ligand>
        <name>ATP</name>
        <dbReference type="ChEBI" id="CHEBI:30616"/>
        <note>ligand shared between two neighboring subunits</note>
    </ligand>
</feature>
<feature type="binding site" evidence="1">
    <location>
        <position position="257"/>
    </location>
    <ligand>
        <name>L-methionine</name>
        <dbReference type="ChEBI" id="CHEBI:57844"/>
        <note>ligand shared between two neighboring subunits</note>
    </ligand>
</feature>
<feature type="binding site" description="in other chain" evidence="1">
    <location>
        <begin position="263"/>
        <end position="264"/>
    </location>
    <ligand>
        <name>ATP</name>
        <dbReference type="ChEBI" id="CHEBI:30616"/>
        <note>ligand shared between two neighboring subunits</note>
    </ligand>
</feature>
<feature type="binding site" evidence="1">
    <location>
        <position position="280"/>
    </location>
    <ligand>
        <name>ATP</name>
        <dbReference type="ChEBI" id="CHEBI:30616"/>
        <note>ligand shared between two neighboring subunits</note>
    </ligand>
</feature>
<feature type="binding site" evidence="1">
    <location>
        <position position="284"/>
    </location>
    <ligand>
        <name>ATP</name>
        <dbReference type="ChEBI" id="CHEBI:30616"/>
        <note>ligand shared between two neighboring subunits</note>
    </ligand>
</feature>
<feature type="binding site" description="in other chain" evidence="1">
    <location>
        <position position="288"/>
    </location>
    <ligand>
        <name>L-methionine</name>
        <dbReference type="ChEBI" id="CHEBI:57844"/>
        <note>ligand shared between two neighboring subunits</note>
    </ligand>
</feature>
<dbReference type="EC" id="2.5.1.6" evidence="1"/>
<dbReference type="EMBL" id="CP000825">
    <property type="protein sequence ID" value="ABV49953.1"/>
    <property type="molecule type" value="Genomic_DNA"/>
</dbReference>
<dbReference type="RefSeq" id="WP_012007107.1">
    <property type="nucleotide sequence ID" value="NC_009840.1"/>
</dbReference>
<dbReference type="SMR" id="A8G2X2"/>
<dbReference type="STRING" id="93060.P9215_03361"/>
<dbReference type="KEGG" id="pmh:P9215_03361"/>
<dbReference type="eggNOG" id="COG0192">
    <property type="taxonomic scope" value="Bacteria"/>
</dbReference>
<dbReference type="HOGENOM" id="CLU_041802_1_1_3"/>
<dbReference type="OrthoDB" id="9801686at2"/>
<dbReference type="UniPathway" id="UPA00315">
    <property type="reaction ID" value="UER00080"/>
</dbReference>
<dbReference type="Proteomes" id="UP000002014">
    <property type="component" value="Chromosome"/>
</dbReference>
<dbReference type="GO" id="GO:0005737">
    <property type="term" value="C:cytoplasm"/>
    <property type="evidence" value="ECO:0007669"/>
    <property type="project" value="UniProtKB-SubCell"/>
</dbReference>
<dbReference type="GO" id="GO:0005524">
    <property type="term" value="F:ATP binding"/>
    <property type="evidence" value="ECO:0007669"/>
    <property type="project" value="UniProtKB-UniRule"/>
</dbReference>
<dbReference type="GO" id="GO:0000287">
    <property type="term" value="F:magnesium ion binding"/>
    <property type="evidence" value="ECO:0007669"/>
    <property type="project" value="UniProtKB-UniRule"/>
</dbReference>
<dbReference type="GO" id="GO:0004478">
    <property type="term" value="F:methionine adenosyltransferase activity"/>
    <property type="evidence" value="ECO:0007669"/>
    <property type="project" value="UniProtKB-UniRule"/>
</dbReference>
<dbReference type="GO" id="GO:0006730">
    <property type="term" value="P:one-carbon metabolic process"/>
    <property type="evidence" value="ECO:0007669"/>
    <property type="project" value="UniProtKB-KW"/>
</dbReference>
<dbReference type="GO" id="GO:0006556">
    <property type="term" value="P:S-adenosylmethionine biosynthetic process"/>
    <property type="evidence" value="ECO:0007669"/>
    <property type="project" value="UniProtKB-UniRule"/>
</dbReference>
<dbReference type="CDD" id="cd18079">
    <property type="entry name" value="S-AdoMet_synt"/>
    <property type="match status" value="1"/>
</dbReference>
<dbReference type="FunFam" id="3.30.300.10:FF:000003">
    <property type="entry name" value="S-adenosylmethionine synthase"/>
    <property type="match status" value="1"/>
</dbReference>
<dbReference type="Gene3D" id="3.30.300.10">
    <property type="match status" value="3"/>
</dbReference>
<dbReference type="HAMAP" id="MF_00086">
    <property type="entry name" value="S_AdoMet_synth1"/>
    <property type="match status" value="1"/>
</dbReference>
<dbReference type="InterPro" id="IPR022631">
    <property type="entry name" value="ADOMET_SYNTHASE_CS"/>
</dbReference>
<dbReference type="InterPro" id="IPR022630">
    <property type="entry name" value="S-AdoMet_synt_C"/>
</dbReference>
<dbReference type="InterPro" id="IPR022629">
    <property type="entry name" value="S-AdoMet_synt_central"/>
</dbReference>
<dbReference type="InterPro" id="IPR022628">
    <property type="entry name" value="S-AdoMet_synt_N"/>
</dbReference>
<dbReference type="InterPro" id="IPR002133">
    <property type="entry name" value="S-AdoMet_synthetase"/>
</dbReference>
<dbReference type="InterPro" id="IPR022636">
    <property type="entry name" value="S-AdoMet_synthetase_sfam"/>
</dbReference>
<dbReference type="NCBIfam" id="TIGR01034">
    <property type="entry name" value="metK"/>
    <property type="match status" value="1"/>
</dbReference>
<dbReference type="PANTHER" id="PTHR11964">
    <property type="entry name" value="S-ADENOSYLMETHIONINE SYNTHETASE"/>
    <property type="match status" value="1"/>
</dbReference>
<dbReference type="Pfam" id="PF02773">
    <property type="entry name" value="S-AdoMet_synt_C"/>
    <property type="match status" value="1"/>
</dbReference>
<dbReference type="Pfam" id="PF02772">
    <property type="entry name" value="S-AdoMet_synt_M"/>
    <property type="match status" value="1"/>
</dbReference>
<dbReference type="Pfam" id="PF00438">
    <property type="entry name" value="S-AdoMet_synt_N"/>
    <property type="match status" value="1"/>
</dbReference>
<dbReference type="PIRSF" id="PIRSF000497">
    <property type="entry name" value="MAT"/>
    <property type="match status" value="1"/>
</dbReference>
<dbReference type="SUPFAM" id="SSF55973">
    <property type="entry name" value="S-adenosylmethionine synthetase"/>
    <property type="match status" value="3"/>
</dbReference>
<dbReference type="PROSITE" id="PS00376">
    <property type="entry name" value="ADOMET_SYNTHASE_1"/>
    <property type="match status" value="1"/>
</dbReference>
<dbReference type="PROSITE" id="PS00377">
    <property type="entry name" value="ADOMET_SYNTHASE_2"/>
    <property type="match status" value="1"/>
</dbReference>
<comment type="function">
    <text evidence="1">Catalyzes the formation of S-adenosylmethionine (AdoMet) from methionine and ATP. The overall synthetic reaction is composed of two sequential steps, AdoMet formation and the subsequent tripolyphosphate hydrolysis which occurs prior to release of AdoMet from the enzyme.</text>
</comment>
<comment type="catalytic activity">
    <reaction evidence="1">
        <text>L-methionine + ATP + H2O = S-adenosyl-L-methionine + phosphate + diphosphate</text>
        <dbReference type="Rhea" id="RHEA:21080"/>
        <dbReference type="ChEBI" id="CHEBI:15377"/>
        <dbReference type="ChEBI" id="CHEBI:30616"/>
        <dbReference type="ChEBI" id="CHEBI:33019"/>
        <dbReference type="ChEBI" id="CHEBI:43474"/>
        <dbReference type="ChEBI" id="CHEBI:57844"/>
        <dbReference type="ChEBI" id="CHEBI:59789"/>
        <dbReference type="EC" id="2.5.1.6"/>
    </reaction>
</comment>
<comment type="cofactor">
    <cofactor evidence="1">
        <name>Mg(2+)</name>
        <dbReference type="ChEBI" id="CHEBI:18420"/>
    </cofactor>
    <text evidence="1">Binds 2 divalent ions per subunit.</text>
</comment>
<comment type="cofactor">
    <cofactor evidence="1">
        <name>K(+)</name>
        <dbReference type="ChEBI" id="CHEBI:29103"/>
    </cofactor>
    <text evidence="1">Binds 1 potassium ion per subunit.</text>
</comment>
<comment type="pathway">
    <text evidence="1">Amino-acid biosynthesis; S-adenosyl-L-methionine biosynthesis; S-adenosyl-L-methionine from L-methionine: step 1/1.</text>
</comment>
<comment type="subunit">
    <text evidence="1">Homotetramer; dimer of dimers.</text>
</comment>
<comment type="subcellular location">
    <subcellularLocation>
        <location evidence="1">Cytoplasm</location>
    </subcellularLocation>
</comment>
<comment type="similarity">
    <text evidence="1">Belongs to the AdoMet synthase family.</text>
</comment>
<proteinExistence type="inferred from homology"/>